<name>IFT46_DANRE</name>
<feature type="chain" id="PRO_0000399499" description="Intraflagellar transport protein 46 homolog">
    <location>
        <begin position="1"/>
        <end position="384"/>
    </location>
</feature>
<feature type="region of interest" description="Disordered" evidence="3">
    <location>
        <begin position="52"/>
        <end position="151"/>
    </location>
</feature>
<feature type="region of interest" description="Disordered" evidence="3">
    <location>
        <begin position="358"/>
        <end position="384"/>
    </location>
</feature>
<feature type="compositionally biased region" description="Basic and acidic residues" evidence="3">
    <location>
        <begin position="87"/>
        <end position="99"/>
    </location>
</feature>
<feature type="compositionally biased region" description="Acidic residues" evidence="3">
    <location>
        <begin position="110"/>
        <end position="138"/>
    </location>
</feature>
<feature type="compositionally biased region" description="Polar residues" evidence="3">
    <location>
        <begin position="358"/>
        <end position="374"/>
    </location>
</feature>
<feature type="sequence conflict" description="In Ref. 2; AAI51862." evidence="5" ref="2">
    <original>H</original>
    <variation>R</variation>
    <location>
        <position position="153"/>
    </location>
</feature>
<feature type="sequence conflict" description="In Ref. 2; AAI51862." evidence="5" ref="2">
    <original>F</original>
    <variation>S</variation>
    <location>
        <position position="184"/>
    </location>
</feature>
<feature type="sequence conflict" description="In Ref. 2; AAI51862." evidence="5" ref="2">
    <original>K</original>
    <variation>R</variation>
    <location>
        <position position="200"/>
    </location>
</feature>
<reference key="1">
    <citation type="journal article" date="2013" name="Nature">
        <title>The zebrafish reference genome sequence and its relationship to the human genome.</title>
        <authorList>
            <person name="Howe K."/>
            <person name="Clark M.D."/>
            <person name="Torroja C.F."/>
            <person name="Torrance J."/>
            <person name="Berthelot C."/>
            <person name="Muffato M."/>
            <person name="Collins J.E."/>
            <person name="Humphray S."/>
            <person name="McLaren K."/>
            <person name="Matthews L."/>
            <person name="McLaren S."/>
            <person name="Sealy I."/>
            <person name="Caccamo M."/>
            <person name="Churcher C."/>
            <person name="Scott C."/>
            <person name="Barrett J.C."/>
            <person name="Koch R."/>
            <person name="Rauch G.J."/>
            <person name="White S."/>
            <person name="Chow W."/>
            <person name="Kilian B."/>
            <person name="Quintais L.T."/>
            <person name="Guerra-Assuncao J.A."/>
            <person name="Zhou Y."/>
            <person name="Gu Y."/>
            <person name="Yen J."/>
            <person name="Vogel J.H."/>
            <person name="Eyre T."/>
            <person name="Redmond S."/>
            <person name="Banerjee R."/>
            <person name="Chi J."/>
            <person name="Fu B."/>
            <person name="Langley E."/>
            <person name="Maguire S.F."/>
            <person name="Laird G.K."/>
            <person name="Lloyd D."/>
            <person name="Kenyon E."/>
            <person name="Donaldson S."/>
            <person name="Sehra H."/>
            <person name="Almeida-King J."/>
            <person name="Loveland J."/>
            <person name="Trevanion S."/>
            <person name="Jones M."/>
            <person name="Quail M."/>
            <person name="Willey D."/>
            <person name="Hunt A."/>
            <person name="Burton J."/>
            <person name="Sims S."/>
            <person name="McLay K."/>
            <person name="Plumb B."/>
            <person name="Davis J."/>
            <person name="Clee C."/>
            <person name="Oliver K."/>
            <person name="Clark R."/>
            <person name="Riddle C."/>
            <person name="Elliot D."/>
            <person name="Threadgold G."/>
            <person name="Harden G."/>
            <person name="Ware D."/>
            <person name="Begum S."/>
            <person name="Mortimore B."/>
            <person name="Kerry G."/>
            <person name="Heath P."/>
            <person name="Phillimore B."/>
            <person name="Tracey A."/>
            <person name="Corby N."/>
            <person name="Dunn M."/>
            <person name="Johnson C."/>
            <person name="Wood J."/>
            <person name="Clark S."/>
            <person name="Pelan S."/>
            <person name="Griffiths G."/>
            <person name="Smith M."/>
            <person name="Glithero R."/>
            <person name="Howden P."/>
            <person name="Barker N."/>
            <person name="Lloyd C."/>
            <person name="Stevens C."/>
            <person name="Harley J."/>
            <person name="Holt K."/>
            <person name="Panagiotidis G."/>
            <person name="Lovell J."/>
            <person name="Beasley H."/>
            <person name="Henderson C."/>
            <person name="Gordon D."/>
            <person name="Auger K."/>
            <person name="Wright D."/>
            <person name="Collins J."/>
            <person name="Raisen C."/>
            <person name="Dyer L."/>
            <person name="Leung K."/>
            <person name="Robertson L."/>
            <person name="Ambridge K."/>
            <person name="Leongamornlert D."/>
            <person name="McGuire S."/>
            <person name="Gilderthorp R."/>
            <person name="Griffiths C."/>
            <person name="Manthravadi D."/>
            <person name="Nichol S."/>
            <person name="Barker G."/>
            <person name="Whitehead S."/>
            <person name="Kay M."/>
            <person name="Brown J."/>
            <person name="Murnane C."/>
            <person name="Gray E."/>
            <person name="Humphries M."/>
            <person name="Sycamore N."/>
            <person name="Barker D."/>
            <person name="Saunders D."/>
            <person name="Wallis J."/>
            <person name="Babbage A."/>
            <person name="Hammond S."/>
            <person name="Mashreghi-Mohammadi M."/>
            <person name="Barr L."/>
            <person name="Martin S."/>
            <person name="Wray P."/>
            <person name="Ellington A."/>
            <person name="Matthews N."/>
            <person name="Ellwood M."/>
            <person name="Woodmansey R."/>
            <person name="Clark G."/>
            <person name="Cooper J."/>
            <person name="Tromans A."/>
            <person name="Grafham D."/>
            <person name="Skuce C."/>
            <person name="Pandian R."/>
            <person name="Andrews R."/>
            <person name="Harrison E."/>
            <person name="Kimberley A."/>
            <person name="Garnett J."/>
            <person name="Fosker N."/>
            <person name="Hall R."/>
            <person name="Garner P."/>
            <person name="Kelly D."/>
            <person name="Bird C."/>
            <person name="Palmer S."/>
            <person name="Gehring I."/>
            <person name="Berger A."/>
            <person name="Dooley C.M."/>
            <person name="Ersan-Urun Z."/>
            <person name="Eser C."/>
            <person name="Geiger H."/>
            <person name="Geisler M."/>
            <person name="Karotki L."/>
            <person name="Kirn A."/>
            <person name="Konantz J."/>
            <person name="Konantz M."/>
            <person name="Oberlander M."/>
            <person name="Rudolph-Geiger S."/>
            <person name="Teucke M."/>
            <person name="Lanz C."/>
            <person name="Raddatz G."/>
            <person name="Osoegawa K."/>
            <person name="Zhu B."/>
            <person name="Rapp A."/>
            <person name="Widaa S."/>
            <person name="Langford C."/>
            <person name="Yang F."/>
            <person name="Schuster S.C."/>
            <person name="Carter N.P."/>
            <person name="Harrow J."/>
            <person name="Ning Z."/>
            <person name="Herrero J."/>
            <person name="Searle S.M."/>
            <person name="Enright A."/>
            <person name="Geisler R."/>
            <person name="Plasterk R.H."/>
            <person name="Lee C."/>
            <person name="Westerfield M."/>
            <person name="de Jong P.J."/>
            <person name="Zon L.I."/>
            <person name="Postlethwait J.H."/>
            <person name="Nusslein-Volhard C."/>
            <person name="Hubbard T.J."/>
            <person name="Roest Crollius H."/>
            <person name="Rogers J."/>
            <person name="Stemple D.L."/>
        </authorList>
    </citation>
    <scope>NUCLEOTIDE SEQUENCE [LARGE SCALE GENOMIC DNA]</scope>
    <source>
        <strain>Tuebingen</strain>
    </source>
</reference>
<reference evidence="5 7" key="2">
    <citation type="submission" date="2007-08" db="EMBL/GenBank/DDBJ databases">
        <authorList>
            <consortium name="NIH - Zebrafish Gene Collection (ZGC) project"/>
        </authorList>
    </citation>
    <scope>NUCLEOTIDE SEQUENCE [LARGE SCALE MRNA] OF 13-384</scope>
    <source>
        <tissue evidence="6">Olfactory epithelium</tissue>
        <tissue evidence="7">Testis</tissue>
    </source>
</reference>
<reference evidence="5" key="3">
    <citation type="journal article" date="2007" name="J. Biol. Chem.">
        <title>Knockdown of the intraflagellar transport protein IFT46 stimulates selective gene expression in mouse chondrocytes and affects early development in zebrafish.</title>
        <authorList>
            <person name="Gouttenoire J."/>
            <person name="Valcourt U."/>
            <person name="Bougault C."/>
            <person name="Aubert-Foucher E."/>
            <person name="Arnaud E."/>
            <person name="Giraud L."/>
            <person name="Mallein-Gerin F."/>
        </authorList>
    </citation>
    <scope>FUNCTION</scope>
    <scope>DEVELOPMENTAL STAGE</scope>
    <scope>DISRUPTION PHENOTYPE</scope>
</reference>
<organism>
    <name type="scientific">Danio rerio</name>
    <name type="common">Zebrafish</name>
    <name type="synonym">Brachydanio rerio</name>
    <dbReference type="NCBI Taxonomy" id="7955"/>
    <lineage>
        <taxon>Eukaryota</taxon>
        <taxon>Metazoa</taxon>
        <taxon>Chordata</taxon>
        <taxon>Craniata</taxon>
        <taxon>Vertebrata</taxon>
        <taxon>Euteleostomi</taxon>
        <taxon>Actinopterygii</taxon>
        <taxon>Neopterygii</taxon>
        <taxon>Teleostei</taxon>
        <taxon>Ostariophysi</taxon>
        <taxon>Cypriniformes</taxon>
        <taxon>Danionidae</taxon>
        <taxon>Danioninae</taxon>
        <taxon>Danio</taxon>
    </lineage>
</organism>
<dbReference type="EMBL" id="CU570991">
    <property type="status" value="NOT_ANNOTATED_CDS"/>
    <property type="molecule type" value="Genomic_DNA"/>
</dbReference>
<dbReference type="EMBL" id="BC122332">
    <property type="protein sequence ID" value="AAI22333.1"/>
    <property type="molecule type" value="mRNA"/>
</dbReference>
<dbReference type="EMBL" id="BC151861">
    <property type="protein sequence ID" value="AAI51862.1"/>
    <property type="molecule type" value="mRNA"/>
</dbReference>
<dbReference type="SMR" id="A7MBP4"/>
<dbReference type="FunCoup" id="A7MBP4">
    <property type="interactions" value="1785"/>
</dbReference>
<dbReference type="STRING" id="7955.ENSDARP00000083038"/>
<dbReference type="PaxDb" id="7955-ENSDARP00000083038"/>
<dbReference type="PeptideAtlas" id="A7MBP4"/>
<dbReference type="AGR" id="ZFIN:ZDB-GENE-080102-3"/>
<dbReference type="ZFIN" id="ZDB-GENE-080102-3">
    <property type="gene designation" value="ift46"/>
</dbReference>
<dbReference type="eggNOG" id="ENOG502QPNA">
    <property type="taxonomic scope" value="Eukaryota"/>
</dbReference>
<dbReference type="InParanoid" id="A7MBP4"/>
<dbReference type="PhylomeDB" id="A7MBP4"/>
<dbReference type="PRO" id="PR:A7MBP4"/>
<dbReference type="Proteomes" id="UP000000437">
    <property type="component" value="Unplaced"/>
</dbReference>
<dbReference type="GO" id="GO:0036064">
    <property type="term" value="C:ciliary basal body"/>
    <property type="evidence" value="ECO:0000314"/>
    <property type="project" value="ZFIN"/>
</dbReference>
<dbReference type="GO" id="GO:0005737">
    <property type="term" value="C:cytoplasm"/>
    <property type="evidence" value="ECO:0007669"/>
    <property type="project" value="UniProtKB-KW"/>
</dbReference>
<dbReference type="GO" id="GO:0030992">
    <property type="term" value="C:intraciliary transport particle B"/>
    <property type="evidence" value="ECO:0000250"/>
    <property type="project" value="UniProtKB"/>
</dbReference>
<dbReference type="GO" id="GO:0005815">
    <property type="term" value="C:microtubule organizing center"/>
    <property type="evidence" value="ECO:0000318"/>
    <property type="project" value="GO_Central"/>
</dbReference>
<dbReference type="GO" id="GO:0031514">
    <property type="term" value="C:motile cilium"/>
    <property type="evidence" value="ECO:0000318"/>
    <property type="project" value="GO_Central"/>
</dbReference>
<dbReference type="GO" id="GO:0060271">
    <property type="term" value="P:cilium assembly"/>
    <property type="evidence" value="ECO:0000315"/>
    <property type="project" value="ZFIN"/>
</dbReference>
<dbReference type="GO" id="GO:0048264">
    <property type="term" value="P:determination of ventral identity"/>
    <property type="evidence" value="ECO:0000315"/>
    <property type="project" value="ZFIN"/>
</dbReference>
<dbReference type="GO" id="GO:0042073">
    <property type="term" value="P:intraciliary transport"/>
    <property type="evidence" value="ECO:0000318"/>
    <property type="project" value="GO_Central"/>
</dbReference>
<dbReference type="GO" id="GO:0048793">
    <property type="term" value="P:pronephros development"/>
    <property type="evidence" value="ECO:0000315"/>
    <property type="project" value="ZFIN"/>
</dbReference>
<dbReference type="GO" id="GO:0060041">
    <property type="term" value="P:retina development in camera-type eye"/>
    <property type="evidence" value="ECO:0000315"/>
    <property type="project" value="ZFIN"/>
</dbReference>
<dbReference type="InterPro" id="IPR022088">
    <property type="entry name" value="Intraflagellar_transp_cmplxB"/>
</dbReference>
<dbReference type="PANTHER" id="PTHR13376">
    <property type="entry name" value="INTRAFLAGELLAR TRANSPORT PROTEIN 46 HOMOLOG"/>
    <property type="match status" value="1"/>
</dbReference>
<dbReference type="PANTHER" id="PTHR13376:SF0">
    <property type="entry name" value="INTRAFLAGELLAR TRANSPORT PROTEIN 46 HOMOLOG"/>
    <property type="match status" value="1"/>
</dbReference>
<dbReference type="Pfam" id="PF12317">
    <property type="entry name" value="IFT46_B_C"/>
    <property type="match status" value="1"/>
</dbReference>
<sequence>MASVAYICSLPVNTSRDQVSLATVHRLVFMERSERQKIQLTTNQPYDESFEVNAEEAASVHTPSPRQIVSRRTGRQKQSTMSGYAGEKLEEDTKRKKEPPPGPRGANKNDEEEDEDDDDDDDDDDSDDTESDEEEEEPGSAPEGAYDPADYEHLPVTGEIKELFQYITRYTPQTIELDHKLKPFIPDFIPAVGDIDAFLKVPRPDGKPDNLGLLVLDEPCTKQSDPTVLSLWLSENSKQHNVTEVKVKSIENPEKNPKAIDNWIESISELHRSKPPATVHYTRPMPDIDSLMQEWPSEFEELLGKVNLPTADIDCDLAEYVDMICGILDIPVYKNRIHSLHVLFTLYSEFKNSQHFKSATDGQKSDTPPASRSATAEIERLTLD</sequence>
<proteinExistence type="evidence at transcript level"/>
<gene>
    <name evidence="7 8" type="primary">ift46</name>
</gene>
<evidence type="ECO:0000250" key="1">
    <source>
        <dbReference type="UniProtKB" id="Q9DB07"/>
    </source>
</evidence>
<evidence type="ECO:0000255" key="2"/>
<evidence type="ECO:0000256" key="3">
    <source>
        <dbReference type="SAM" id="MobiDB-lite"/>
    </source>
</evidence>
<evidence type="ECO:0000269" key="4">
    <source>
    </source>
</evidence>
<evidence type="ECO:0000305" key="5"/>
<evidence type="ECO:0000312" key="6">
    <source>
        <dbReference type="EMBL" id="AAI22333.1"/>
    </source>
</evidence>
<evidence type="ECO:0000312" key="7">
    <source>
        <dbReference type="EMBL" id="AAI51862.1"/>
    </source>
</evidence>
<evidence type="ECO:0000312" key="8">
    <source>
        <dbReference type="ZFIN" id="ZDB-GENE-080102-3"/>
    </source>
</evidence>
<protein>
    <recommendedName>
        <fullName evidence="1 8">Intraflagellar transport protein 46 homolog</fullName>
    </recommendedName>
</protein>
<keyword id="KW-0966">Cell projection</keyword>
<keyword id="KW-0969">Cilium</keyword>
<keyword id="KW-0963">Cytoplasm</keyword>
<keyword id="KW-0206">Cytoskeleton</keyword>
<keyword id="KW-1185">Reference proteome</keyword>
<accession>A7MBP4</accession>
<accession>Q0P418</accession>
<comment type="function">
    <text evidence="1 4">Forms part of a complex involved in intraflagellar transport (IFT), the bi-directional movement of particles required for the assembly, maintenance and functioning of primary cilia. Plays a role in early embryonic development.</text>
</comment>
<comment type="subcellular location">
    <subcellularLocation>
        <location evidence="1">Cytoplasm</location>
        <location evidence="1">Cytoskeleton</location>
        <location evidence="1">Cilium basal body</location>
    </subcellularLocation>
    <subcellularLocation>
        <location evidence="1">Cell projection</location>
        <location evidence="1">Cilium</location>
    </subcellularLocation>
</comment>
<comment type="developmental stage">
    <text evidence="4">Expressed ubiquitously during early embryonic development. Expression is detected at 3 hours post fertilization (hpf) and reaches a peak at 20 hpf.</text>
</comment>
<comment type="disruption phenotype">
    <text evidence="4">Individuals display a number of developmental defects, including dorsalization and formation of ectopic tail.</text>
</comment>
<comment type="similarity">
    <text evidence="2">Belongs to the IFT46 family.</text>
</comment>